<keyword id="KW-0967">Endosome</keyword>
<keyword id="KW-0646">Protease inhibitor</keyword>
<keyword id="KW-1185">Reference proteome</keyword>
<keyword id="KW-0789">Thiol protease inhibitor</keyword>
<reference key="1">
    <citation type="journal article" date="2004" name="Nature">
        <title>Genome evolution in yeasts.</title>
        <authorList>
            <person name="Dujon B."/>
            <person name="Sherman D."/>
            <person name="Fischer G."/>
            <person name="Durrens P."/>
            <person name="Casaregola S."/>
            <person name="Lafontaine I."/>
            <person name="de Montigny J."/>
            <person name="Marck C."/>
            <person name="Neuveglise C."/>
            <person name="Talla E."/>
            <person name="Goffard N."/>
            <person name="Frangeul L."/>
            <person name="Aigle M."/>
            <person name="Anthouard V."/>
            <person name="Babour A."/>
            <person name="Barbe V."/>
            <person name="Barnay S."/>
            <person name="Blanchin S."/>
            <person name="Beckerich J.-M."/>
            <person name="Beyne E."/>
            <person name="Bleykasten C."/>
            <person name="Boisrame A."/>
            <person name="Boyer J."/>
            <person name="Cattolico L."/>
            <person name="Confanioleri F."/>
            <person name="de Daruvar A."/>
            <person name="Despons L."/>
            <person name="Fabre E."/>
            <person name="Fairhead C."/>
            <person name="Ferry-Dumazet H."/>
            <person name="Groppi A."/>
            <person name="Hantraye F."/>
            <person name="Hennequin C."/>
            <person name="Jauniaux N."/>
            <person name="Joyet P."/>
            <person name="Kachouri R."/>
            <person name="Kerrest A."/>
            <person name="Koszul R."/>
            <person name="Lemaire M."/>
            <person name="Lesur I."/>
            <person name="Ma L."/>
            <person name="Muller H."/>
            <person name="Nicaud J.-M."/>
            <person name="Nikolski M."/>
            <person name="Oztas S."/>
            <person name="Ozier-Kalogeropoulos O."/>
            <person name="Pellenz S."/>
            <person name="Potier S."/>
            <person name="Richard G.-F."/>
            <person name="Straub M.-L."/>
            <person name="Suleau A."/>
            <person name="Swennen D."/>
            <person name="Tekaia F."/>
            <person name="Wesolowski-Louvel M."/>
            <person name="Westhof E."/>
            <person name="Wirth B."/>
            <person name="Zeniou-Meyer M."/>
            <person name="Zivanovic Y."/>
            <person name="Bolotin-Fukuhara M."/>
            <person name="Thierry A."/>
            <person name="Bouchier C."/>
            <person name="Caudron B."/>
            <person name="Scarpelli C."/>
            <person name="Gaillardin C."/>
            <person name="Weissenbach J."/>
            <person name="Wincker P."/>
            <person name="Souciet J.-L."/>
        </authorList>
    </citation>
    <scope>NUCLEOTIDE SEQUENCE [LARGE SCALE GENOMIC DNA]</scope>
    <source>
        <strain>ATCC 2001 / BCRC 20586 / JCM 3761 / NBRC 0622 / NRRL Y-65 / CBS 138</strain>
    </source>
</reference>
<sequence>MKSTQQLGQEAREFEFNPNIPLHLYLKTCVTLLNNASECFQRGDKSLSYFYYFRYVDLCTNKLPNHPTIRSTSTGLDNDSKLYVQEYKQLLRLEVPHILKIMEELKTELDAMYERHKVSLANNIASPISYKHNNRMDALLHDYYTERGCTGHSMQHKTSLHKNENFNERINLMKDSFMGRAPNGSQEVRNVSNTFYPDLPTLS</sequence>
<accession>Q6FKA3</accession>
<proteinExistence type="inferred from homology"/>
<name>RFU1_CANGA</name>
<gene>
    <name type="primary">RFU1</name>
    <name type="ordered locus">CAGL0L13156g</name>
</gene>
<dbReference type="EMBL" id="CR380958">
    <property type="protein sequence ID" value="CAG62315.1"/>
    <property type="molecule type" value="Genomic_DNA"/>
</dbReference>
<dbReference type="RefSeq" id="XP_449341.1">
    <property type="nucleotide sequence ID" value="XM_449341.1"/>
</dbReference>
<dbReference type="SMR" id="Q6FKA3"/>
<dbReference type="FunCoup" id="Q6FKA3">
    <property type="interactions" value="35"/>
</dbReference>
<dbReference type="STRING" id="284593.Q6FKA3"/>
<dbReference type="EnsemblFungi" id="CAGL0L13156g-T">
    <property type="protein sequence ID" value="CAGL0L13156g-T-p1"/>
    <property type="gene ID" value="CAGL0L13156g"/>
</dbReference>
<dbReference type="KEGG" id="cgr:2890591"/>
<dbReference type="CGD" id="CAL0135822">
    <property type="gene designation" value="CAGL0L13156g"/>
</dbReference>
<dbReference type="VEuPathDB" id="FungiDB:B1J91_L13156g"/>
<dbReference type="VEuPathDB" id="FungiDB:CAGL0L13156g"/>
<dbReference type="eggNOG" id="ENOG502S3ZX">
    <property type="taxonomic scope" value="Eukaryota"/>
</dbReference>
<dbReference type="HOGENOM" id="CLU_1348926_0_0_1"/>
<dbReference type="InParanoid" id="Q6FKA3"/>
<dbReference type="Proteomes" id="UP000002428">
    <property type="component" value="Chromosome L"/>
</dbReference>
<dbReference type="GO" id="GO:0005768">
    <property type="term" value="C:endosome"/>
    <property type="evidence" value="ECO:0007669"/>
    <property type="project" value="UniProtKB-SubCell"/>
</dbReference>
<dbReference type="GO" id="GO:0016020">
    <property type="term" value="C:membrane"/>
    <property type="evidence" value="ECO:0007669"/>
    <property type="project" value="TreeGrafter"/>
</dbReference>
<dbReference type="GO" id="GO:0004869">
    <property type="term" value="F:cysteine-type endopeptidase inhibitor activity"/>
    <property type="evidence" value="ECO:0007669"/>
    <property type="project" value="UniProtKB-KW"/>
</dbReference>
<dbReference type="GO" id="GO:0061578">
    <property type="term" value="F:K63-linked deubiquitinase activity"/>
    <property type="evidence" value="ECO:0007669"/>
    <property type="project" value="TreeGrafter"/>
</dbReference>
<dbReference type="GO" id="GO:0070536">
    <property type="term" value="P:protein K63-linked deubiquitination"/>
    <property type="evidence" value="ECO:0007669"/>
    <property type="project" value="TreeGrafter"/>
</dbReference>
<dbReference type="GO" id="GO:0010992">
    <property type="term" value="P:ubiquitin recycling"/>
    <property type="evidence" value="ECO:0007669"/>
    <property type="project" value="EnsemblFungi"/>
</dbReference>
<dbReference type="Gene3D" id="1.20.58.80">
    <property type="entry name" value="Phosphotransferase system, lactose/cellobiose-type IIA subunit"/>
    <property type="match status" value="1"/>
</dbReference>
<dbReference type="InterPro" id="IPR015063">
    <property type="entry name" value="USP8_dimer"/>
</dbReference>
<dbReference type="PANTHER" id="PTHR12947">
    <property type="entry name" value="AMSH-LIKE PROTEASE"/>
    <property type="match status" value="1"/>
</dbReference>
<dbReference type="PANTHER" id="PTHR12947:SF13">
    <property type="entry name" value="FI19924P1"/>
    <property type="match status" value="1"/>
</dbReference>
<dbReference type="Pfam" id="PF08969">
    <property type="entry name" value="USP8_dimer"/>
    <property type="match status" value="1"/>
</dbReference>
<protein>
    <recommendedName>
        <fullName>Regulator of free ubiquitin chains 1</fullName>
    </recommendedName>
</protein>
<organism>
    <name type="scientific">Candida glabrata (strain ATCC 2001 / BCRC 20586 / JCM 3761 / NBRC 0622 / NRRL Y-65 / CBS 138)</name>
    <name type="common">Yeast</name>
    <name type="synonym">Nakaseomyces glabratus</name>
    <dbReference type="NCBI Taxonomy" id="284593"/>
    <lineage>
        <taxon>Eukaryota</taxon>
        <taxon>Fungi</taxon>
        <taxon>Dikarya</taxon>
        <taxon>Ascomycota</taxon>
        <taxon>Saccharomycotina</taxon>
        <taxon>Saccharomycetes</taxon>
        <taxon>Saccharomycetales</taxon>
        <taxon>Saccharomycetaceae</taxon>
        <taxon>Nakaseomyces</taxon>
    </lineage>
</organism>
<comment type="function">
    <text evidence="1">Inhibitor of the DOA4 deubiquitinase involved in the regulation of protein degradation by the proteasome and maintenance of a normal level of free ubiquitin.</text>
</comment>
<comment type="subcellular location">
    <subcellularLocation>
        <location evidence="1">Endosome</location>
    </subcellularLocation>
</comment>
<comment type="similarity">
    <text evidence="2">Belongs to the RFU1 family.</text>
</comment>
<feature type="chain" id="PRO_0000376813" description="Regulator of free ubiquitin chains 1">
    <location>
        <begin position="1"/>
        <end position="203"/>
    </location>
</feature>
<evidence type="ECO:0000250" key="1"/>
<evidence type="ECO:0000305" key="2"/>